<gene>
    <name type="ordered locus">Veis_0584</name>
</gene>
<comment type="function">
    <text evidence="1">ATP-dependent carboxylate-amine ligase which exhibits weak glutamate--cysteine ligase activity.</text>
</comment>
<comment type="catalytic activity">
    <reaction evidence="1">
        <text>L-cysteine + L-glutamate + ATP = gamma-L-glutamyl-L-cysteine + ADP + phosphate + H(+)</text>
        <dbReference type="Rhea" id="RHEA:13285"/>
        <dbReference type="ChEBI" id="CHEBI:15378"/>
        <dbReference type="ChEBI" id="CHEBI:29985"/>
        <dbReference type="ChEBI" id="CHEBI:30616"/>
        <dbReference type="ChEBI" id="CHEBI:35235"/>
        <dbReference type="ChEBI" id="CHEBI:43474"/>
        <dbReference type="ChEBI" id="CHEBI:58173"/>
        <dbReference type="ChEBI" id="CHEBI:456216"/>
        <dbReference type="EC" id="6.3.2.2"/>
    </reaction>
</comment>
<comment type="similarity">
    <text evidence="1">Belongs to the glutamate--cysteine ligase type 2 family. YbdK subfamily.</text>
</comment>
<reference key="1">
    <citation type="submission" date="2006-12" db="EMBL/GenBank/DDBJ databases">
        <title>Complete sequence of chromosome 1 of Verminephrobacter eiseniae EF01-2.</title>
        <authorList>
            <person name="Copeland A."/>
            <person name="Lucas S."/>
            <person name="Lapidus A."/>
            <person name="Barry K."/>
            <person name="Detter J.C."/>
            <person name="Glavina del Rio T."/>
            <person name="Dalin E."/>
            <person name="Tice H."/>
            <person name="Pitluck S."/>
            <person name="Chertkov O."/>
            <person name="Brettin T."/>
            <person name="Bruce D."/>
            <person name="Han C."/>
            <person name="Tapia R."/>
            <person name="Gilna P."/>
            <person name="Schmutz J."/>
            <person name="Larimer F."/>
            <person name="Land M."/>
            <person name="Hauser L."/>
            <person name="Kyrpides N."/>
            <person name="Kim E."/>
            <person name="Stahl D."/>
            <person name="Richardson P."/>
        </authorList>
    </citation>
    <scope>NUCLEOTIDE SEQUENCE [LARGE SCALE GENOMIC DNA]</scope>
    <source>
        <strain>EF01-2</strain>
    </source>
</reference>
<organism>
    <name type="scientific">Verminephrobacter eiseniae (strain EF01-2)</name>
    <dbReference type="NCBI Taxonomy" id="391735"/>
    <lineage>
        <taxon>Bacteria</taxon>
        <taxon>Pseudomonadati</taxon>
        <taxon>Pseudomonadota</taxon>
        <taxon>Betaproteobacteria</taxon>
        <taxon>Burkholderiales</taxon>
        <taxon>Comamonadaceae</taxon>
        <taxon>Verminephrobacter</taxon>
    </lineage>
</organism>
<proteinExistence type="inferred from homology"/>
<feature type="chain" id="PRO_0000291518" description="Putative glutamate--cysteine ligase 2">
    <location>
        <begin position="1"/>
        <end position="374"/>
    </location>
</feature>
<keyword id="KW-0067">ATP-binding</keyword>
<keyword id="KW-0436">Ligase</keyword>
<keyword id="KW-0547">Nucleotide-binding</keyword>
<keyword id="KW-1185">Reference proteome</keyword>
<name>GCS2_VEREI</name>
<sequence length="374" mass="41973">MGLEAFSRSAPLTLGVELELQLVNTNDYDLAPYADDMLRLMKKTPLPGSVVPEMTNSMIEISTGICHSCSEVLGQLTPIRDALVKSADKLNIAVLGGGTHPFQQWHERRIYDKPRFRELSELYGYLSKQFTIFGQHVHIGCPDANAALLMLHRMSRYIPHFIALSASSPYVQGQDTAFDSARLNSVFAFPLSGRAPLALTWEDFGAYFDKMTRTGVVRSMKDFYWDIRPKPEFGTIEIRVFDTPLTIERAAALAGYVQSLGAWFLADQPFMPAEDDYLVYTYNRFQACRFGLEAVYVDPAAGGHMPLRQHILATMDEMASHAAAQGASSALHLLRTEVEAGQNDARWLRERQREEQLLAEVCRQAAQRFRGLAL</sequence>
<dbReference type="EC" id="6.3.2.2" evidence="1"/>
<dbReference type="EMBL" id="CP000542">
    <property type="protein sequence ID" value="ABM56367.1"/>
    <property type="molecule type" value="Genomic_DNA"/>
</dbReference>
<dbReference type="RefSeq" id="WP_011808381.1">
    <property type="nucleotide sequence ID" value="NC_008786.1"/>
</dbReference>
<dbReference type="SMR" id="A1WFG0"/>
<dbReference type="STRING" id="391735.Veis_0584"/>
<dbReference type="GeneID" id="76459286"/>
<dbReference type="KEGG" id="vei:Veis_0584"/>
<dbReference type="eggNOG" id="COG2170">
    <property type="taxonomic scope" value="Bacteria"/>
</dbReference>
<dbReference type="HOGENOM" id="CLU_044848_1_1_4"/>
<dbReference type="OrthoDB" id="9769628at2"/>
<dbReference type="Proteomes" id="UP000000374">
    <property type="component" value="Chromosome"/>
</dbReference>
<dbReference type="GO" id="GO:0005524">
    <property type="term" value="F:ATP binding"/>
    <property type="evidence" value="ECO:0007669"/>
    <property type="project" value="UniProtKB-KW"/>
</dbReference>
<dbReference type="GO" id="GO:0004357">
    <property type="term" value="F:glutamate-cysteine ligase activity"/>
    <property type="evidence" value="ECO:0007669"/>
    <property type="project" value="UniProtKB-EC"/>
</dbReference>
<dbReference type="GO" id="GO:0042398">
    <property type="term" value="P:modified amino acid biosynthetic process"/>
    <property type="evidence" value="ECO:0007669"/>
    <property type="project" value="InterPro"/>
</dbReference>
<dbReference type="Gene3D" id="3.30.590.20">
    <property type="match status" value="1"/>
</dbReference>
<dbReference type="HAMAP" id="MF_01609">
    <property type="entry name" value="Glu_cys_ligase_2"/>
    <property type="match status" value="1"/>
</dbReference>
<dbReference type="InterPro" id="IPR050141">
    <property type="entry name" value="GCL_type2/YbdK_subfam"/>
</dbReference>
<dbReference type="InterPro" id="IPR006336">
    <property type="entry name" value="GCS2"/>
</dbReference>
<dbReference type="InterPro" id="IPR014746">
    <property type="entry name" value="Gln_synth/guanido_kin_cat_dom"/>
</dbReference>
<dbReference type="InterPro" id="IPR011793">
    <property type="entry name" value="YbdK"/>
</dbReference>
<dbReference type="NCBIfam" id="TIGR02050">
    <property type="entry name" value="gshA_cyan_rel"/>
    <property type="match status" value="1"/>
</dbReference>
<dbReference type="NCBIfam" id="NF010040">
    <property type="entry name" value="PRK13516.1"/>
    <property type="match status" value="1"/>
</dbReference>
<dbReference type="PANTHER" id="PTHR36510">
    <property type="entry name" value="GLUTAMATE--CYSTEINE LIGASE 2-RELATED"/>
    <property type="match status" value="1"/>
</dbReference>
<dbReference type="PANTHER" id="PTHR36510:SF1">
    <property type="entry name" value="GLUTAMATE--CYSTEINE LIGASE 2-RELATED"/>
    <property type="match status" value="1"/>
</dbReference>
<dbReference type="Pfam" id="PF04107">
    <property type="entry name" value="GCS2"/>
    <property type="match status" value="1"/>
</dbReference>
<dbReference type="SUPFAM" id="SSF55931">
    <property type="entry name" value="Glutamine synthetase/guanido kinase"/>
    <property type="match status" value="1"/>
</dbReference>
<evidence type="ECO:0000255" key="1">
    <source>
        <dbReference type="HAMAP-Rule" id="MF_01609"/>
    </source>
</evidence>
<accession>A1WFG0</accession>
<protein>
    <recommendedName>
        <fullName evidence="1">Putative glutamate--cysteine ligase 2</fullName>
        <ecNumber evidence="1">6.3.2.2</ecNumber>
    </recommendedName>
    <alternativeName>
        <fullName evidence="1">Gamma-glutamylcysteine synthetase 2</fullName>
        <shortName evidence="1">GCS 2</shortName>
        <shortName evidence="1">Gamma-GCS 2</shortName>
    </alternativeName>
</protein>